<accession>A3MZZ7</accession>
<name>ACCD_ACTP2</name>
<evidence type="ECO:0000255" key="1">
    <source>
        <dbReference type="HAMAP-Rule" id="MF_01395"/>
    </source>
</evidence>
<evidence type="ECO:0000255" key="2">
    <source>
        <dbReference type="PROSITE-ProRule" id="PRU01136"/>
    </source>
</evidence>
<evidence type="ECO:0000256" key="3">
    <source>
        <dbReference type="SAM" id="MobiDB-lite"/>
    </source>
</evidence>
<sequence>MSWIERILGRTSSSSSSSKSKVPEGVWTKCTSCEQVLYSEELKRNMHVCPKCNHHMRFDARTRLLSLLDQDSAQEIAAELEPQDVLKFKDLKKYKDRLTAAQKQTGEKDSFITMYGTLHNMPVVVASFNFEFMGGSMGSVVGAKFVRAAERALADNIPFICFSASGGARMQEALFSLMQMAKTSAILAKMREKGIPFISILTDPTLGGVSASLAMLGDINIAEPKALIGFAGPRVIEQTVREKLPEGFQRAEFLLEHGAIDMIVQRKDMRDTLARLCAKMTNKPTPFKTAELIVEEA</sequence>
<protein>
    <recommendedName>
        <fullName evidence="1">Acetyl-coenzyme A carboxylase carboxyl transferase subunit beta</fullName>
        <shortName evidence="1">ACCase subunit beta</shortName>
        <shortName evidence="1">Acetyl-CoA carboxylase carboxyltransferase subunit beta</shortName>
        <ecNumber evidence="1">2.1.3.15</ecNumber>
    </recommendedName>
</protein>
<comment type="function">
    <text evidence="1">Component of the acetyl coenzyme A carboxylase (ACC) complex. Biotin carboxylase (BC) catalyzes the carboxylation of biotin on its carrier protein (BCCP) and then the CO(2) group is transferred by the transcarboxylase to acetyl-CoA to form malonyl-CoA.</text>
</comment>
<comment type="catalytic activity">
    <reaction evidence="1">
        <text>N(6)-carboxybiotinyl-L-lysyl-[protein] + acetyl-CoA = N(6)-biotinyl-L-lysyl-[protein] + malonyl-CoA</text>
        <dbReference type="Rhea" id="RHEA:54728"/>
        <dbReference type="Rhea" id="RHEA-COMP:10505"/>
        <dbReference type="Rhea" id="RHEA-COMP:10506"/>
        <dbReference type="ChEBI" id="CHEBI:57288"/>
        <dbReference type="ChEBI" id="CHEBI:57384"/>
        <dbReference type="ChEBI" id="CHEBI:83144"/>
        <dbReference type="ChEBI" id="CHEBI:83145"/>
        <dbReference type="EC" id="2.1.3.15"/>
    </reaction>
</comment>
<comment type="cofactor">
    <cofactor evidence="1">
        <name>Zn(2+)</name>
        <dbReference type="ChEBI" id="CHEBI:29105"/>
    </cofactor>
    <text evidence="1">Binds 1 zinc ion per subunit.</text>
</comment>
<comment type="pathway">
    <text evidence="1">Lipid metabolism; malonyl-CoA biosynthesis; malonyl-CoA from acetyl-CoA: step 1/1.</text>
</comment>
<comment type="subunit">
    <text evidence="1">Acetyl-CoA carboxylase is a heterohexamer composed of biotin carboxyl carrier protein (AccB), biotin carboxylase (AccC) and two subunits each of ACCase subunit alpha (AccA) and ACCase subunit beta (AccD).</text>
</comment>
<comment type="subcellular location">
    <subcellularLocation>
        <location evidence="1">Cytoplasm</location>
    </subcellularLocation>
</comment>
<comment type="similarity">
    <text evidence="1">Belongs to the AccD/PCCB family.</text>
</comment>
<gene>
    <name evidence="1" type="primary">accD</name>
    <name type="ordered locus">APL_0631</name>
</gene>
<organism>
    <name type="scientific">Actinobacillus pleuropneumoniae serotype 5b (strain L20)</name>
    <dbReference type="NCBI Taxonomy" id="416269"/>
    <lineage>
        <taxon>Bacteria</taxon>
        <taxon>Pseudomonadati</taxon>
        <taxon>Pseudomonadota</taxon>
        <taxon>Gammaproteobacteria</taxon>
        <taxon>Pasteurellales</taxon>
        <taxon>Pasteurellaceae</taxon>
        <taxon>Actinobacillus</taxon>
    </lineage>
</organism>
<reference key="1">
    <citation type="journal article" date="2008" name="J. Bacteriol.">
        <title>The complete genome sequence of Actinobacillus pleuropneumoniae L20 (serotype 5b).</title>
        <authorList>
            <person name="Foote S.J."/>
            <person name="Bosse J.T."/>
            <person name="Bouevitch A.B."/>
            <person name="Langford P.R."/>
            <person name="Young N.M."/>
            <person name="Nash J.H.E."/>
        </authorList>
    </citation>
    <scope>NUCLEOTIDE SEQUENCE [LARGE SCALE GENOMIC DNA]</scope>
    <source>
        <strain>L20</strain>
    </source>
</reference>
<keyword id="KW-0067">ATP-binding</keyword>
<keyword id="KW-0963">Cytoplasm</keyword>
<keyword id="KW-0275">Fatty acid biosynthesis</keyword>
<keyword id="KW-0276">Fatty acid metabolism</keyword>
<keyword id="KW-0444">Lipid biosynthesis</keyword>
<keyword id="KW-0443">Lipid metabolism</keyword>
<keyword id="KW-0479">Metal-binding</keyword>
<keyword id="KW-0547">Nucleotide-binding</keyword>
<keyword id="KW-1185">Reference proteome</keyword>
<keyword id="KW-0808">Transferase</keyword>
<keyword id="KW-0862">Zinc</keyword>
<keyword id="KW-0863">Zinc-finger</keyword>
<feature type="chain" id="PRO_0000358945" description="Acetyl-coenzyme A carboxylase carboxyl transferase subunit beta">
    <location>
        <begin position="1"/>
        <end position="297"/>
    </location>
</feature>
<feature type="domain" description="CoA carboxyltransferase N-terminal" evidence="2">
    <location>
        <begin position="26"/>
        <end position="295"/>
    </location>
</feature>
<feature type="zinc finger region" description="C4-type" evidence="1">
    <location>
        <begin position="30"/>
        <end position="52"/>
    </location>
</feature>
<feature type="region of interest" description="Disordered" evidence="3">
    <location>
        <begin position="1"/>
        <end position="23"/>
    </location>
</feature>
<feature type="binding site" evidence="1">
    <location>
        <position position="30"/>
    </location>
    <ligand>
        <name>Zn(2+)</name>
        <dbReference type="ChEBI" id="CHEBI:29105"/>
    </ligand>
</feature>
<feature type="binding site" evidence="1">
    <location>
        <position position="33"/>
    </location>
    <ligand>
        <name>Zn(2+)</name>
        <dbReference type="ChEBI" id="CHEBI:29105"/>
    </ligand>
</feature>
<feature type="binding site" evidence="1">
    <location>
        <position position="49"/>
    </location>
    <ligand>
        <name>Zn(2+)</name>
        <dbReference type="ChEBI" id="CHEBI:29105"/>
    </ligand>
</feature>
<feature type="binding site" evidence="1">
    <location>
        <position position="52"/>
    </location>
    <ligand>
        <name>Zn(2+)</name>
        <dbReference type="ChEBI" id="CHEBI:29105"/>
    </ligand>
</feature>
<dbReference type="EC" id="2.1.3.15" evidence="1"/>
<dbReference type="EMBL" id="CP000569">
    <property type="protein sequence ID" value="ABN73733.1"/>
    <property type="molecule type" value="Genomic_DNA"/>
</dbReference>
<dbReference type="RefSeq" id="WP_011848439.1">
    <property type="nucleotide sequence ID" value="NC_009053.1"/>
</dbReference>
<dbReference type="SMR" id="A3MZZ7"/>
<dbReference type="STRING" id="416269.APL_0631"/>
<dbReference type="EnsemblBacteria" id="ABN73733">
    <property type="protein sequence ID" value="ABN73733"/>
    <property type="gene ID" value="APL_0631"/>
</dbReference>
<dbReference type="KEGG" id="apl:APL_0631"/>
<dbReference type="PATRIC" id="fig|416269.6.peg.662"/>
<dbReference type="eggNOG" id="COG0777">
    <property type="taxonomic scope" value="Bacteria"/>
</dbReference>
<dbReference type="HOGENOM" id="CLU_015486_1_0_6"/>
<dbReference type="UniPathway" id="UPA00655">
    <property type="reaction ID" value="UER00711"/>
</dbReference>
<dbReference type="Proteomes" id="UP000001432">
    <property type="component" value="Chromosome"/>
</dbReference>
<dbReference type="GO" id="GO:0009329">
    <property type="term" value="C:acetate CoA-transferase complex"/>
    <property type="evidence" value="ECO:0007669"/>
    <property type="project" value="TreeGrafter"/>
</dbReference>
<dbReference type="GO" id="GO:0003989">
    <property type="term" value="F:acetyl-CoA carboxylase activity"/>
    <property type="evidence" value="ECO:0007669"/>
    <property type="project" value="InterPro"/>
</dbReference>
<dbReference type="GO" id="GO:0005524">
    <property type="term" value="F:ATP binding"/>
    <property type="evidence" value="ECO:0007669"/>
    <property type="project" value="UniProtKB-KW"/>
</dbReference>
<dbReference type="GO" id="GO:0016743">
    <property type="term" value="F:carboxyl- or carbamoyltransferase activity"/>
    <property type="evidence" value="ECO:0007669"/>
    <property type="project" value="UniProtKB-UniRule"/>
</dbReference>
<dbReference type="GO" id="GO:0008270">
    <property type="term" value="F:zinc ion binding"/>
    <property type="evidence" value="ECO:0007669"/>
    <property type="project" value="UniProtKB-UniRule"/>
</dbReference>
<dbReference type="GO" id="GO:0006633">
    <property type="term" value="P:fatty acid biosynthetic process"/>
    <property type="evidence" value="ECO:0007669"/>
    <property type="project" value="UniProtKB-KW"/>
</dbReference>
<dbReference type="GO" id="GO:2001295">
    <property type="term" value="P:malonyl-CoA biosynthetic process"/>
    <property type="evidence" value="ECO:0007669"/>
    <property type="project" value="UniProtKB-UniRule"/>
</dbReference>
<dbReference type="Gene3D" id="3.90.226.10">
    <property type="entry name" value="2-enoyl-CoA Hydratase, Chain A, domain 1"/>
    <property type="match status" value="1"/>
</dbReference>
<dbReference type="HAMAP" id="MF_01395">
    <property type="entry name" value="AcetylCoA_CT_beta"/>
    <property type="match status" value="1"/>
</dbReference>
<dbReference type="InterPro" id="IPR034733">
    <property type="entry name" value="AcCoA_carboxyl_beta"/>
</dbReference>
<dbReference type="InterPro" id="IPR000438">
    <property type="entry name" value="Acetyl_CoA_COase_Trfase_b_su"/>
</dbReference>
<dbReference type="InterPro" id="IPR029045">
    <property type="entry name" value="ClpP/crotonase-like_dom_sf"/>
</dbReference>
<dbReference type="InterPro" id="IPR011762">
    <property type="entry name" value="COA_CT_N"/>
</dbReference>
<dbReference type="InterPro" id="IPR041010">
    <property type="entry name" value="Znf-ACC"/>
</dbReference>
<dbReference type="NCBIfam" id="TIGR00515">
    <property type="entry name" value="accD"/>
    <property type="match status" value="1"/>
</dbReference>
<dbReference type="PANTHER" id="PTHR42995">
    <property type="entry name" value="ACETYL-COENZYME A CARBOXYLASE CARBOXYL TRANSFERASE SUBUNIT BETA, CHLOROPLASTIC"/>
    <property type="match status" value="1"/>
</dbReference>
<dbReference type="PANTHER" id="PTHR42995:SF5">
    <property type="entry name" value="ACETYL-COENZYME A CARBOXYLASE CARBOXYL TRANSFERASE SUBUNIT BETA, CHLOROPLASTIC"/>
    <property type="match status" value="1"/>
</dbReference>
<dbReference type="Pfam" id="PF01039">
    <property type="entry name" value="Carboxyl_trans"/>
    <property type="match status" value="1"/>
</dbReference>
<dbReference type="Pfam" id="PF17848">
    <property type="entry name" value="Zn_ribbon_ACC"/>
    <property type="match status" value="1"/>
</dbReference>
<dbReference type="PRINTS" id="PR01070">
    <property type="entry name" value="ACCCTRFRASEB"/>
</dbReference>
<dbReference type="SUPFAM" id="SSF52096">
    <property type="entry name" value="ClpP/crotonase"/>
    <property type="match status" value="1"/>
</dbReference>
<dbReference type="PROSITE" id="PS50980">
    <property type="entry name" value="COA_CT_NTER"/>
    <property type="match status" value="1"/>
</dbReference>
<proteinExistence type="inferred from homology"/>